<reference key="1">
    <citation type="submission" date="2007-11" db="EMBL/GenBank/DDBJ databases">
        <authorList>
            <consortium name="The Salmonella enterica serovar Paratyphi B Genome Sequencing Project"/>
            <person name="McClelland M."/>
            <person name="Sanderson E.K."/>
            <person name="Porwollik S."/>
            <person name="Spieth J."/>
            <person name="Clifton W.S."/>
            <person name="Fulton R."/>
            <person name="Cordes M."/>
            <person name="Wollam A."/>
            <person name="Shah N."/>
            <person name="Pepin K."/>
            <person name="Bhonagiri V."/>
            <person name="Nash W."/>
            <person name="Johnson M."/>
            <person name="Thiruvilangam P."/>
            <person name="Wilson R."/>
        </authorList>
    </citation>
    <scope>NUCLEOTIDE SEQUENCE [LARGE SCALE GENOMIC DNA]</scope>
    <source>
        <strain>ATCC BAA-1250 / SPB7</strain>
    </source>
</reference>
<sequence length="128" mass="15094">MYDNLKSLGITNPEEIDRYSLRQEANNDILKIYFQKDRGEFFAKSVKFKYPRQRKTVVADGIGQGYKEVQEISPNLRYVIDELDQICQRDRSELDLKRKILDDLRHLESVVANKISEIEADLDKLTRK</sequence>
<protein>
    <recommendedName>
        <fullName evidence="1">UPF0325 protein YaeH</fullName>
    </recommendedName>
</protein>
<name>YAEH_SALPB</name>
<organism>
    <name type="scientific">Salmonella paratyphi B (strain ATCC BAA-1250 / SPB7)</name>
    <dbReference type="NCBI Taxonomy" id="1016998"/>
    <lineage>
        <taxon>Bacteria</taxon>
        <taxon>Pseudomonadati</taxon>
        <taxon>Pseudomonadota</taxon>
        <taxon>Gammaproteobacteria</taxon>
        <taxon>Enterobacterales</taxon>
        <taxon>Enterobacteriaceae</taxon>
        <taxon>Salmonella</taxon>
    </lineage>
</organism>
<evidence type="ECO:0000255" key="1">
    <source>
        <dbReference type="HAMAP-Rule" id="MF_01519"/>
    </source>
</evidence>
<feature type="chain" id="PRO_1000087548" description="UPF0325 protein YaeH">
    <location>
        <begin position="1"/>
        <end position="128"/>
    </location>
</feature>
<comment type="similarity">
    <text evidence="1">Belongs to the UPF0325 family.</text>
</comment>
<proteinExistence type="inferred from homology"/>
<dbReference type="EMBL" id="CP000886">
    <property type="protein sequence ID" value="ABX65711.1"/>
    <property type="molecule type" value="Genomic_DNA"/>
</dbReference>
<dbReference type="RefSeq" id="WP_000272193.1">
    <property type="nucleotide sequence ID" value="NC_010102.1"/>
</dbReference>
<dbReference type="SMR" id="A9N0Q9"/>
<dbReference type="KEGG" id="spq:SPAB_00269"/>
<dbReference type="PATRIC" id="fig|1016998.12.peg.261"/>
<dbReference type="HOGENOM" id="CLU_136774_0_0_6"/>
<dbReference type="BioCyc" id="SENT1016998:SPAB_RS01095-MONOMER"/>
<dbReference type="Proteomes" id="UP000008556">
    <property type="component" value="Chromosome"/>
</dbReference>
<dbReference type="HAMAP" id="MF_01519">
    <property type="entry name" value="UPF0325"/>
    <property type="match status" value="1"/>
</dbReference>
<dbReference type="InterPro" id="IPR020911">
    <property type="entry name" value="UPF0325"/>
</dbReference>
<dbReference type="NCBIfam" id="NF010213">
    <property type="entry name" value="PRK13677.1"/>
    <property type="match status" value="1"/>
</dbReference>
<dbReference type="Pfam" id="PF11944">
    <property type="entry name" value="DUF3461"/>
    <property type="match status" value="1"/>
</dbReference>
<accession>A9N0Q9</accession>
<gene>
    <name evidence="1" type="primary">yaeH</name>
    <name type="ordered locus">SPAB_00269</name>
</gene>